<sequence length="531" mass="57624">MTSGFDYIVVGGGSAGCVLAARLSENPSVRVCLIEAGRRDTHPLIHMPVGFAKMTTGPHTWDLLTEPQKHANNRQIPYVQGRILGGGSSINAEVFTRGHPSDFDRWAAEGADGWSFRDVQKYFIRSEGNAVFSGTWHGTNGPLGVSNLAEPNPTSRAFVQSCQEMGLPYNPDFNGASQEGAGIYQMTIRNNRRCSTAVGYLRPALGRKNLTVVTRALVLKIVFNGTRATGVQYIANGTLNTAEASQEIVVTAGAIGTPKLMMLSGVGPAAHLRENGIPVVQDLPGVGENLQDHFGVDIVAELKTDESFDKYRKLHWMLWAGLEYTMFRSGPVASNVVEGGAFWYSDPSSGVPDLQFHFLAEAGAEAGVTSVPKGASGITLNSYVLRPKSRGTVRLRSADPRVNPMVDPNFLGDPADLETSAEGVRLSYEMFSQPSLEKHIRKTCFFSGKQPTMQMYRDYAREHGRTSYHPTCTCKMGRDDMSVVDPRLKVHGLEGIRICDSSVMPSLLGSNTNAATIMISERAADFIQGNA</sequence>
<reference key="1">
    <citation type="journal article" date="1997" name="Appl. Environ. Microbiol.">
        <title>Cloning of genes coding for L-sorbose and L-sorbosone dehydrogenases from Gluconobacter oxydans and microbial production of 2-keto-L-gulonate, a precursor of L-ascorbic acid, in a recombinant G. oxydans strain.</title>
        <authorList>
            <person name="Saito Y."/>
            <person name="Ishii Y."/>
            <person name="Hayashi H."/>
            <person name="Imao Y."/>
            <person name="Akashi T."/>
            <person name="Yoshikawa K."/>
            <person name="Noguchi Y."/>
            <person name="Soeda S."/>
            <person name="Yoshida M."/>
            <person name="Niwa M."/>
            <person name="Hosoda J."/>
            <person name="Shimomura K."/>
        </authorList>
    </citation>
    <scope>NUCLEOTIDE SEQUENCE [GENOMIC DNA]</scope>
    <source>
        <strain>T-100</strain>
    </source>
</reference>
<protein>
    <recommendedName>
        <fullName>L-sorbose 1-dehydrogenase</fullName>
        <shortName>SDH</shortName>
        <ecNumber>1.1.99.32</ecNumber>
    </recommendedName>
</protein>
<keyword id="KW-0274">FAD</keyword>
<keyword id="KW-0285">Flavoprotein</keyword>
<keyword id="KW-0560">Oxidoreductase</keyword>
<accession>Q47944</accession>
<proteinExistence type="inferred from homology"/>
<feature type="chain" id="PRO_0000338412" description="L-sorbose 1-dehydrogenase">
    <location>
        <begin position="1"/>
        <end position="531"/>
    </location>
</feature>
<feature type="active site" description="Proton acceptor" evidence="2">
    <location>
        <position position="469"/>
    </location>
</feature>
<dbReference type="EC" id="1.1.99.32"/>
<dbReference type="EMBL" id="D86622">
    <property type="protein sequence ID" value="BAA13145.1"/>
    <property type="molecule type" value="Genomic_DNA"/>
</dbReference>
<dbReference type="SMR" id="Q47944"/>
<dbReference type="OrthoDB" id="269227at2759"/>
<dbReference type="BioCyc" id="MetaCyc:MONOMER-13711"/>
<dbReference type="BRENDA" id="1.1.99.32">
    <property type="organism ID" value="38"/>
</dbReference>
<dbReference type="GO" id="GO:0050660">
    <property type="term" value="F:flavin adenine dinucleotide binding"/>
    <property type="evidence" value="ECO:0007669"/>
    <property type="project" value="InterPro"/>
</dbReference>
<dbReference type="GO" id="GO:0016614">
    <property type="term" value="F:oxidoreductase activity, acting on CH-OH group of donors"/>
    <property type="evidence" value="ECO:0007669"/>
    <property type="project" value="InterPro"/>
</dbReference>
<dbReference type="Gene3D" id="3.50.50.60">
    <property type="entry name" value="FAD/NAD(P)-binding domain"/>
    <property type="match status" value="1"/>
</dbReference>
<dbReference type="Gene3D" id="3.30.560.10">
    <property type="entry name" value="Glucose Oxidase, domain 3"/>
    <property type="match status" value="1"/>
</dbReference>
<dbReference type="InterPro" id="IPR036188">
    <property type="entry name" value="FAD/NAD-bd_sf"/>
</dbReference>
<dbReference type="InterPro" id="IPR012132">
    <property type="entry name" value="GMC_OxRdtase"/>
</dbReference>
<dbReference type="InterPro" id="IPR000172">
    <property type="entry name" value="GMC_OxRdtase_N"/>
</dbReference>
<dbReference type="InterPro" id="IPR007867">
    <property type="entry name" value="GMC_OxRtase_C"/>
</dbReference>
<dbReference type="PANTHER" id="PTHR11552:SF147">
    <property type="entry name" value="CHOLINE DEHYDROGENASE, MITOCHONDRIAL"/>
    <property type="match status" value="1"/>
</dbReference>
<dbReference type="PANTHER" id="PTHR11552">
    <property type="entry name" value="GLUCOSE-METHANOL-CHOLINE GMC OXIDOREDUCTASE"/>
    <property type="match status" value="1"/>
</dbReference>
<dbReference type="Pfam" id="PF05199">
    <property type="entry name" value="GMC_oxred_C"/>
    <property type="match status" value="1"/>
</dbReference>
<dbReference type="Pfam" id="PF00732">
    <property type="entry name" value="GMC_oxred_N"/>
    <property type="match status" value="1"/>
</dbReference>
<dbReference type="PIRSF" id="PIRSF000137">
    <property type="entry name" value="Alcohol_oxidase"/>
    <property type="match status" value="1"/>
</dbReference>
<dbReference type="SUPFAM" id="SSF54373">
    <property type="entry name" value="FAD-linked reductases, C-terminal domain"/>
    <property type="match status" value="1"/>
</dbReference>
<dbReference type="SUPFAM" id="SSF51905">
    <property type="entry name" value="FAD/NAD(P)-binding domain"/>
    <property type="match status" value="1"/>
</dbReference>
<dbReference type="PROSITE" id="PS00623">
    <property type="entry name" value="GMC_OXRED_1"/>
    <property type="match status" value="1"/>
</dbReference>
<dbReference type="PROSITE" id="PS00624">
    <property type="entry name" value="GMC_OXRED_2"/>
    <property type="match status" value="1"/>
</dbReference>
<comment type="catalytic activity">
    <reaction>
        <text>L-sorbopyranose + A = 1-dehydro-L-sorbose + AH2</text>
        <dbReference type="Rhea" id="RHEA:24878"/>
        <dbReference type="ChEBI" id="CHEBI:13193"/>
        <dbReference type="ChEBI" id="CHEBI:17499"/>
        <dbReference type="ChEBI" id="CHEBI:48649"/>
        <dbReference type="ChEBI" id="CHEBI:48657"/>
        <dbReference type="EC" id="1.1.99.32"/>
    </reaction>
</comment>
<comment type="cofactor">
    <cofactor evidence="1">
        <name>FAD</name>
        <dbReference type="ChEBI" id="CHEBI:57692"/>
    </cofactor>
</comment>
<comment type="similarity">
    <text evidence="3">Belongs to the GMC oxidoreductase family.</text>
</comment>
<name>SDH_GLUOY</name>
<organism>
    <name type="scientific">Gluconobacter oxydans</name>
    <name type="common">Gluconobacter suboxydans</name>
    <dbReference type="NCBI Taxonomy" id="442"/>
    <lineage>
        <taxon>Bacteria</taxon>
        <taxon>Pseudomonadati</taxon>
        <taxon>Pseudomonadota</taxon>
        <taxon>Alphaproteobacteria</taxon>
        <taxon>Acetobacterales</taxon>
        <taxon>Acetobacteraceae</taxon>
        <taxon>Gluconobacter</taxon>
    </lineage>
</organism>
<evidence type="ECO:0000250" key="1"/>
<evidence type="ECO:0000250" key="2">
    <source>
        <dbReference type="UniProtKB" id="E4QP00"/>
    </source>
</evidence>
<evidence type="ECO:0000305" key="3"/>